<proteinExistence type="inferred from homology"/>
<geneLocation type="chloroplast"/>
<organism>
    <name type="scientific">Saccharum hybrid</name>
    <name type="common">Sugarcane</name>
    <dbReference type="NCBI Taxonomy" id="15819"/>
    <lineage>
        <taxon>Eukaryota</taxon>
        <taxon>Viridiplantae</taxon>
        <taxon>Streptophyta</taxon>
        <taxon>Embryophyta</taxon>
        <taxon>Tracheophyta</taxon>
        <taxon>Spermatophyta</taxon>
        <taxon>Magnoliopsida</taxon>
        <taxon>Liliopsida</taxon>
        <taxon>Poales</taxon>
        <taxon>Poaceae</taxon>
        <taxon>PACMAD clade</taxon>
        <taxon>Panicoideae</taxon>
        <taxon>Andropogonodae</taxon>
        <taxon>Andropogoneae</taxon>
        <taxon>Saccharinae</taxon>
        <taxon>Saccharum</taxon>
    </lineage>
</organism>
<name>ATPB_SACHY</name>
<gene>
    <name evidence="1" type="primary">atpB</name>
    <name type="ordered locus">PS130</name>
</gene>
<protein>
    <recommendedName>
        <fullName evidence="1">ATP synthase subunit beta, chloroplastic</fullName>
        <ecNumber evidence="1">7.1.2.2</ecNumber>
    </recommendedName>
    <alternativeName>
        <fullName evidence="1">ATP synthase F1 sector subunit beta</fullName>
    </alternativeName>
    <alternativeName>
        <fullName evidence="1">F-ATPase subunit beta</fullName>
    </alternativeName>
</protein>
<sequence length="498" mass="53964">MRTNPTTSRPGVSTIEEKSVGRIDQIIGPVLDITFPPGKLPNIYNALIVKSRDTADKQINVTCEVQQLLGNNRVRAVAMSATDGLMRGMEVIDTGTPLSVPVGGATLGRIFNVLGEPIDNLGPVDTSATFPIHRSAPAFIELDTKLSIFETGIKVVDLLAPYRRGGKIGLFGGAGVGKTVLIMELINNIAKAHGGVSVFGGVGERTREGNDLYMEMKESGVINEKNIEESKVALVYGQMNEPPGARMRVGLTALTMAEYFRDVNKQDVLLFIDNIFRFVQAGSEVSALLGRMPSAVGYQPTLSTEMGSLQERITSTKKGSITSIQAVYVPADDLTDPAPATTFAHLDATTVLSRGLASKGIYPAVDPLDSTSTMLQPRIVGNEHYETAQRVKETLQRYKELQDIIAILGLDELSEEDRLTVARARKIERFLSQPFFVAEVFTGSPGKYVGLAETIRGFQLILSGELDGLPEQAFYLVGNIDEASTKAINLEEESKLKK</sequence>
<reference key="1">
    <citation type="journal article" date="2004" name="Curr. Genet.">
        <title>Structural features and transcript-editing analysis of sugarcane (Saccharum officinarum L.) chloroplast genome.</title>
        <authorList>
            <person name="Calsa T. Jr."/>
            <person name="Carraro D.M."/>
            <person name="Benatti M.R."/>
            <person name="Barbosa A.C."/>
            <person name="Kitajima J.P."/>
            <person name="Carrer H."/>
        </authorList>
    </citation>
    <scope>NUCLEOTIDE SEQUENCE [LARGE SCALE GENOMIC DNA]</scope>
    <source>
        <strain>cv. SP-80-3280</strain>
    </source>
</reference>
<dbReference type="EC" id="7.1.2.2" evidence="1"/>
<dbReference type="EMBL" id="AE009947">
    <property type="protein sequence ID" value="AAT44700.1"/>
    <property type="molecule type" value="Genomic_DNA"/>
</dbReference>
<dbReference type="SMR" id="Q6L392"/>
<dbReference type="GO" id="GO:0009535">
    <property type="term" value="C:chloroplast thylakoid membrane"/>
    <property type="evidence" value="ECO:0007669"/>
    <property type="project" value="UniProtKB-SubCell"/>
</dbReference>
<dbReference type="GO" id="GO:0005739">
    <property type="term" value="C:mitochondrion"/>
    <property type="evidence" value="ECO:0007669"/>
    <property type="project" value="GOC"/>
</dbReference>
<dbReference type="GO" id="GO:0045259">
    <property type="term" value="C:proton-transporting ATP synthase complex"/>
    <property type="evidence" value="ECO:0007669"/>
    <property type="project" value="UniProtKB-KW"/>
</dbReference>
<dbReference type="GO" id="GO:0005524">
    <property type="term" value="F:ATP binding"/>
    <property type="evidence" value="ECO:0007669"/>
    <property type="project" value="UniProtKB-UniRule"/>
</dbReference>
<dbReference type="GO" id="GO:0016887">
    <property type="term" value="F:ATP hydrolysis activity"/>
    <property type="evidence" value="ECO:0007669"/>
    <property type="project" value="InterPro"/>
</dbReference>
<dbReference type="GO" id="GO:0046933">
    <property type="term" value="F:proton-transporting ATP synthase activity, rotational mechanism"/>
    <property type="evidence" value="ECO:0007669"/>
    <property type="project" value="UniProtKB-UniRule"/>
</dbReference>
<dbReference type="GO" id="GO:0042776">
    <property type="term" value="P:proton motive force-driven mitochondrial ATP synthesis"/>
    <property type="evidence" value="ECO:0007669"/>
    <property type="project" value="TreeGrafter"/>
</dbReference>
<dbReference type="CDD" id="cd18110">
    <property type="entry name" value="ATP-synt_F1_beta_C"/>
    <property type="match status" value="1"/>
</dbReference>
<dbReference type="CDD" id="cd18115">
    <property type="entry name" value="ATP-synt_F1_beta_N"/>
    <property type="match status" value="1"/>
</dbReference>
<dbReference type="CDD" id="cd01133">
    <property type="entry name" value="F1-ATPase_beta_CD"/>
    <property type="match status" value="1"/>
</dbReference>
<dbReference type="FunFam" id="1.10.1140.10:FF:000001">
    <property type="entry name" value="ATP synthase subunit beta"/>
    <property type="match status" value="1"/>
</dbReference>
<dbReference type="FunFam" id="3.40.50.12240:FF:000006">
    <property type="entry name" value="ATP synthase subunit beta"/>
    <property type="match status" value="1"/>
</dbReference>
<dbReference type="FunFam" id="3.40.50.300:FF:000026">
    <property type="entry name" value="ATP synthase subunit beta"/>
    <property type="match status" value="1"/>
</dbReference>
<dbReference type="FunFam" id="2.40.10.170:FF:000002">
    <property type="entry name" value="ATP synthase subunit beta, chloroplastic"/>
    <property type="match status" value="1"/>
</dbReference>
<dbReference type="Gene3D" id="2.40.10.170">
    <property type="match status" value="1"/>
</dbReference>
<dbReference type="Gene3D" id="1.10.1140.10">
    <property type="entry name" value="Bovine Mitochondrial F1-atpase, Atp Synthase Beta Chain, Chain D, domain 3"/>
    <property type="match status" value="1"/>
</dbReference>
<dbReference type="Gene3D" id="3.40.50.300">
    <property type="entry name" value="P-loop containing nucleotide triphosphate hydrolases"/>
    <property type="match status" value="1"/>
</dbReference>
<dbReference type="HAMAP" id="MF_01347">
    <property type="entry name" value="ATP_synth_beta_bact"/>
    <property type="match status" value="1"/>
</dbReference>
<dbReference type="InterPro" id="IPR003593">
    <property type="entry name" value="AAA+_ATPase"/>
</dbReference>
<dbReference type="InterPro" id="IPR055190">
    <property type="entry name" value="ATP-synt_VA_C"/>
</dbReference>
<dbReference type="InterPro" id="IPR005722">
    <property type="entry name" value="ATP_synth_F1_bsu"/>
</dbReference>
<dbReference type="InterPro" id="IPR020003">
    <property type="entry name" value="ATPase_a/bsu_AS"/>
</dbReference>
<dbReference type="InterPro" id="IPR050053">
    <property type="entry name" value="ATPase_alpha/beta_chains"/>
</dbReference>
<dbReference type="InterPro" id="IPR004100">
    <property type="entry name" value="ATPase_F1/V1/A1_a/bsu_N"/>
</dbReference>
<dbReference type="InterPro" id="IPR036121">
    <property type="entry name" value="ATPase_F1/V1/A1_a/bsu_N_sf"/>
</dbReference>
<dbReference type="InterPro" id="IPR000194">
    <property type="entry name" value="ATPase_F1/V1/A1_a/bsu_nucl-bd"/>
</dbReference>
<dbReference type="InterPro" id="IPR024034">
    <property type="entry name" value="ATPase_F1/V1_b/a_C"/>
</dbReference>
<dbReference type="InterPro" id="IPR027417">
    <property type="entry name" value="P-loop_NTPase"/>
</dbReference>
<dbReference type="NCBIfam" id="TIGR01039">
    <property type="entry name" value="atpD"/>
    <property type="match status" value="1"/>
</dbReference>
<dbReference type="PANTHER" id="PTHR15184">
    <property type="entry name" value="ATP SYNTHASE"/>
    <property type="match status" value="1"/>
</dbReference>
<dbReference type="PANTHER" id="PTHR15184:SF71">
    <property type="entry name" value="ATP SYNTHASE SUBUNIT BETA, MITOCHONDRIAL"/>
    <property type="match status" value="1"/>
</dbReference>
<dbReference type="Pfam" id="PF00006">
    <property type="entry name" value="ATP-synt_ab"/>
    <property type="match status" value="1"/>
</dbReference>
<dbReference type="Pfam" id="PF02874">
    <property type="entry name" value="ATP-synt_ab_N"/>
    <property type="match status" value="1"/>
</dbReference>
<dbReference type="Pfam" id="PF22919">
    <property type="entry name" value="ATP-synt_VA_C"/>
    <property type="match status" value="1"/>
</dbReference>
<dbReference type="SMART" id="SM00382">
    <property type="entry name" value="AAA"/>
    <property type="match status" value="1"/>
</dbReference>
<dbReference type="SUPFAM" id="SSF47917">
    <property type="entry name" value="C-terminal domain of alpha and beta subunits of F1 ATP synthase"/>
    <property type="match status" value="1"/>
</dbReference>
<dbReference type="SUPFAM" id="SSF50615">
    <property type="entry name" value="N-terminal domain of alpha and beta subunits of F1 ATP synthase"/>
    <property type="match status" value="1"/>
</dbReference>
<dbReference type="SUPFAM" id="SSF52540">
    <property type="entry name" value="P-loop containing nucleoside triphosphate hydrolases"/>
    <property type="match status" value="1"/>
</dbReference>
<dbReference type="PROSITE" id="PS00152">
    <property type="entry name" value="ATPASE_ALPHA_BETA"/>
    <property type="match status" value="1"/>
</dbReference>
<feature type="chain" id="PRO_0000226896" description="ATP synthase subunit beta, chloroplastic">
    <location>
        <begin position="1"/>
        <end position="498"/>
    </location>
</feature>
<feature type="binding site" evidence="1">
    <location>
        <begin position="172"/>
        <end position="179"/>
    </location>
    <ligand>
        <name>ATP</name>
        <dbReference type="ChEBI" id="CHEBI:30616"/>
    </ligand>
</feature>
<accession>Q6L392</accession>
<evidence type="ECO:0000255" key="1">
    <source>
        <dbReference type="HAMAP-Rule" id="MF_01347"/>
    </source>
</evidence>
<comment type="function">
    <text evidence="1">Produces ATP from ADP in the presence of a proton gradient across the membrane. The catalytic sites are hosted primarily by the beta subunits.</text>
</comment>
<comment type="catalytic activity">
    <reaction evidence="1">
        <text>ATP + H2O + 4 H(+)(in) = ADP + phosphate + 5 H(+)(out)</text>
        <dbReference type="Rhea" id="RHEA:57720"/>
        <dbReference type="ChEBI" id="CHEBI:15377"/>
        <dbReference type="ChEBI" id="CHEBI:15378"/>
        <dbReference type="ChEBI" id="CHEBI:30616"/>
        <dbReference type="ChEBI" id="CHEBI:43474"/>
        <dbReference type="ChEBI" id="CHEBI:456216"/>
        <dbReference type="EC" id="7.1.2.2"/>
    </reaction>
</comment>
<comment type="subunit">
    <text evidence="1">F-type ATPases have 2 components, CF(1) - the catalytic core - and CF(0) - the membrane proton channel. CF(1) has five subunits: alpha(3), beta(3), gamma(1), delta(1), epsilon(1). CF(0) has four main subunits: a(1), b(1), b'(1) and c(9-12).</text>
</comment>
<comment type="subcellular location">
    <subcellularLocation>
        <location evidence="1">Plastid</location>
        <location evidence="1">Chloroplast thylakoid membrane</location>
        <topology evidence="1">Peripheral membrane protein</topology>
    </subcellularLocation>
</comment>
<comment type="similarity">
    <text evidence="1">Belongs to the ATPase alpha/beta chains family.</text>
</comment>
<keyword id="KW-0066">ATP synthesis</keyword>
<keyword id="KW-0067">ATP-binding</keyword>
<keyword id="KW-0139">CF(1)</keyword>
<keyword id="KW-0150">Chloroplast</keyword>
<keyword id="KW-0375">Hydrogen ion transport</keyword>
<keyword id="KW-0406">Ion transport</keyword>
<keyword id="KW-0472">Membrane</keyword>
<keyword id="KW-0547">Nucleotide-binding</keyword>
<keyword id="KW-0934">Plastid</keyword>
<keyword id="KW-0793">Thylakoid</keyword>
<keyword id="KW-1278">Translocase</keyword>
<keyword id="KW-0813">Transport</keyword>